<gene>
    <name evidence="4" type="primary">esxA</name>
    <name type="ordered locus">NWMN_0219</name>
</gene>
<protein>
    <recommendedName>
        <fullName evidence="5">Type VII secretion system extracellular protein A</fullName>
        <shortName evidence="5">Ess extracellular protein A</shortName>
    </recommendedName>
</protein>
<comment type="function">
    <text evidence="1 3">Virulence factor that is important for the establishment of infection in the host. EsxA is required for EsxB synthesis as well as secretion (PubMed:15657139). Modulates host cell apoptotic pathways and mediates together with EsxB the release of S.aureus from the host cell. By acting on apoptosis, plays a role in the modulation of dendritic cell-mediated immunity (By similarity).</text>
</comment>
<comment type="subcellular location">
    <subcellularLocation>
        <location evidence="3">Secreted</location>
    </subcellularLocation>
    <text evidence="5">Secreted via the ESAT-6 secretion system (Ess) / type VII secretion system (T7SS).</text>
</comment>
<comment type="disruption phenotype">
    <text evidence="3">Mutant shows a significant reduction in the ability to establish kidney or liver abscesses in infected mice.</text>
</comment>
<comment type="similarity">
    <text evidence="5">Belongs to the WXG100 family. sagEsxA-like subfamily.</text>
</comment>
<keyword id="KW-0175">Coiled coil</keyword>
<keyword id="KW-0964">Secreted</keyword>
<keyword id="KW-0843">Virulence</keyword>
<reference key="1">
    <citation type="journal article" date="2008" name="J. Bacteriol.">
        <title>Genome sequence of Staphylococcus aureus strain Newman and comparative analysis of staphylococcal genomes: polymorphism and evolution of two major pathogenicity islands.</title>
        <authorList>
            <person name="Baba T."/>
            <person name="Bae T."/>
            <person name="Schneewind O."/>
            <person name="Takeuchi F."/>
            <person name="Hiramatsu K."/>
        </authorList>
    </citation>
    <scope>NUCLEOTIDE SEQUENCE [LARGE SCALE GENOMIC DNA]</scope>
    <source>
        <strain>Newman</strain>
    </source>
</reference>
<reference key="2">
    <citation type="journal article" date="2005" name="Proc. Natl. Acad. Sci. U.S.A.">
        <title>EsxA and EsxB are secreted by an ESAT-6-like system that is required for the pathogenesis of Staphylococcus aureus infections.</title>
        <authorList>
            <person name="Burts M.L."/>
            <person name="Williams W.A."/>
            <person name="DeBord K."/>
            <person name="Missiakas D.M."/>
        </authorList>
    </citation>
    <scope>FUNCTION IN VIRULENCE</scope>
    <scope>SUBCELLULAR LOCATION</scope>
    <scope>DISRUPTION PHENOTYPE</scope>
    <source>
        <strain>Newman</strain>
    </source>
</reference>
<feature type="chain" id="PRO_0000167828" description="Type VII secretion system extracellular protein A">
    <location>
        <begin position="1"/>
        <end position="97"/>
    </location>
</feature>
<feature type="coiled-coil region" evidence="2">
    <location>
        <begin position="61"/>
        <end position="93"/>
    </location>
</feature>
<proteinExistence type="evidence at protein level"/>
<evidence type="ECO:0000250" key="1">
    <source>
        <dbReference type="UniProtKB" id="A0A0H2XI99"/>
    </source>
</evidence>
<evidence type="ECO:0000255" key="2"/>
<evidence type="ECO:0000269" key="3">
    <source>
    </source>
</evidence>
<evidence type="ECO:0000303" key="4">
    <source>
    </source>
</evidence>
<evidence type="ECO:0000305" key="5"/>
<organism>
    <name type="scientific">Staphylococcus aureus (strain Newman)</name>
    <dbReference type="NCBI Taxonomy" id="426430"/>
    <lineage>
        <taxon>Bacteria</taxon>
        <taxon>Bacillati</taxon>
        <taxon>Bacillota</taxon>
        <taxon>Bacilli</taxon>
        <taxon>Bacillales</taxon>
        <taxon>Staphylococcaceae</taxon>
        <taxon>Staphylococcus</taxon>
    </lineage>
</organism>
<accession>P0C046</accession>
<accession>A6QDQ9</accession>
<sequence length="97" mass="11036">MAMIKMSPEEIRAKSQSYGQGSDQIRQILSDLTRAQGEIAANWEGQAFSRFEEQFQQLSPKVEKFAQLLEEIKQQLNSTADAVQEQDQQLSNNFGLQ</sequence>
<dbReference type="EMBL" id="AP009351">
    <property type="protein sequence ID" value="BAF66491.1"/>
    <property type="molecule type" value="Genomic_DNA"/>
</dbReference>
<dbReference type="RefSeq" id="WP_001240826.1">
    <property type="nucleotide sequence ID" value="NZ_JBBIAE010000003.1"/>
</dbReference>
<dbReference type="SMR" id="P0C046"/>
<dbReference type="GeneID" id="98344606"/>
<dbReference type="KEGG" id="sae:NWMN_0219"/>
<dbReference type="HOGENOM" id="CLU_158563_4_0_9"/>
<dbReference type="Proteomes" id="UP000006386">
    <property type="component" value="Chromosome"/>
</dbReference>
<dbReference type="GO" id="GO:0005576">
    <property type="term" value="C:extracellular region"/>
    <property type="evidence" value="ECO:0007669"/>
    <property type="project" value="UniProtKB-SubCell"/>
</dbReference>
<dbReference type="Gene3D" id="1.10.287.1060">
    <property type="entry name" value="ESAT-6-like"/>
    <property type="match status" value="1"/>
</dbReference>
<dbReference type="InterPro" id="IPR036689">
    <property type="entry name" value="ESAT-6-like_sf"/>
</dbReference>
<dbReference type="InterPro" id="IPR010310">
    <property type="entry name" value="T7SS_ESAT-6-like"/>
</dbReference>
<dbReference type="NCBIfam" id="TIGR03930">
    <property type="entry name" value="WXG100_ESAT6"/>
    <property type="match status" value="1"/>
</dbReference>
<dbReference type="Pfam" id="PF06013">
    <property type="entry name" value="WXG100"/>
    <property type="match status" value="1"/>
</dbReference>
<dbReference type="SUPFAM" id="SSF140453">
    <property type="entry name" value="EsxAB dimer-like"/>
    <property type="match status" value="1"/>
</dbReference>
<name>ESXA_STAAE</name>